<reference key="1">
    <citation type="journal article" date="2009" name="Genome Res.">
        <title>Comparative genomic analyses of the human fungal pathogens Coccidioides and their relatives.</title>
        <authorList>
            <person name="Sharpton T.J."/>
            <person name="Stajich J.E."/>
            <person name="Rounsley S.D."/>
            <person name="Gardner M.J."/>
            <person name="Wortman J.R."/>
            <person name="Jordar V.S."/>
            <person name="Maiti R."/>
            <person name="Kodira C.D."/>
            <person name="Neafsey D.E."/>
            <person name="Zeng Q."/>
            <person name="Hung C.-Y."/>
            <person name="McMahan C."/>
            <person name="Muszewska A."/>
            <person name="Grynberg M."/>
            <person name="Mandel M.A."/>
            <person name="Kellner E.M."/>
            <person name="Barker B.M."/>
            <person name="Galgiani J.N."/>
            <person name="Orbach M.J."/>
            <person name="Kirkland T.N."/>
            <person name="Cole G.T."/>
            <person name="Henn M.R."/>
            <person name="Birren B.W."/>
            <person name="Taylor J.W."/>
        </authorList>
    </citation>
    <scope>NUCLEOTIDE SEQUENCE [LARGE SCALE GENOMIC DNA]</scope>
    <source>
        <strain>RS</strain>
    </source>
</reference>
<reference key="2">
    <citation type="journal article" date="2010" name="Genome Res.">
        <title>Population genomic sequencing of Coccidioides fungi reveals recent hybridization and transposon control.</title>
        <authorList>
            <person name="Neafsey D.E."/>
            <person name="Barker B.M."/>
            <person name="Sharpton T.J."/>
            <person name="Stajich J.E."/>
            <person name="Park D.J."/>
            <person name="Whiston E."/>
            <person name="Hung C.-Y."/>
            <person name="McMahan C."/>
            <person name="White J."/>
            <person name="Sykes S."/>
            <person name="Heiman D."/>
            <person name="Young S."/>
            <person name="Zeng Q."/>
            <person name="Abouelleil A."/>
            <person name="Aftuck L."/>
            <person name="Bessette D."/>
            <person name="Brown A."/>
            <person name="FitzGerald M."/>
            <person name="Lui A."/>
            <person name="Macdonald J.P."/>
            <person name="Priest M."/>
            <person name="Orbach M.J."/>
            <person name="Galgiani J.N."/>
            <person name="Kirkland T.N."/>
            <person name="Cole G.T."/>
            <person name="Birren B.W."/>
            <person name="Henn M.R."/>
            <person name="Taylor J.W."/>
            <person name="Rounsley S.D."/>
        </authorList>
    </citation>
    <scope>GENOME REANNOTATION</scope>
    <source>
        <strain>RS</strain>
    </source>
</reference>
<gene>
    <name type="primary">CBP4</name>
    <name type="ORF">CIMG_10084</name>
</gene>
<organism>
    <name type="scientific">Coccidioides immitis (strain RS)</name>
    <name type="common">Valley fever fungus</name>
    <dbReference type="NCBI Taxonomy" id="246410"/>
    <lineage>
        <taxon>Eukaryota</taxon>
        <taxon>Fungi</taxon>
        <taxon>Dikarya</taxon>
        <taxon>Ascomycota</taxon>
        <taxon>Pezizomycotina</taxon>
        <taxon>Eurotiomycetes</taxon>
        <taxon>Eurotiomycetidae</taxon>
        <taxon>Onygenales</taxon>
        <taxon>Onygenaceae</taxon>
        <taxon>Coccidioides</taxon>
    </lineage>
</organism>
<proteinExistence type="inferred from homology"/>
<accession>Q1DHX9</accession>
<accession>J3K033</accession>
<feature type="chain" id="PRO_0000330126" description="Assembly factor CBP4">
    <location>
        <begin position="1"/>
        <end position="111"/>
    </location>
</feature>
<feature type="transmembrane region" description="Helical" evidence="2">
    <location>
        <begin position="10"/>
        <end position="28"/>
    </location>
</feature>
<feature type="region of interest" description="Disordered" evidence="3">
    <location>
        <begin position="89"/>
        <end position="111"/>
    </location>
</feature>
<feature type="coiled-coil region" evidence="2">
    <location>
        <begin position="79"/>
        <end position="104"/>
    </location>
</feature>
<feature type="compositionally biased region" description="Low complexity" evidence="3">
    <location>
        <begin position="92"/>
        <end position="103"/>
    </location>
</feature>
<dbReference type="EMBL" id="GG704915">
    <property type="protein sequence ID" value="EAS27479.3"/>
    <property type="molecule type" value="Genomic_DNA"/>
</dbReference>
<dbReference type="RefSeq" id="XP_001239062.1">
    <property type="nucleotide sequence ID" value="XM_001239061.2"/>
</dbReference>
<dbReference type="SMR" id="Q1DHX9"/>
<dbReference type="GeneID" id="4557815"/>
<dbReference type="KEGG" id="cim:CIMG_10084"/>
<dbReference type="VEuPathDB" id="FungiDB:CIMG_10084"/>
<dbReference type="InParanoid" id="Q1DHX9"/>
<dbReference type="OMA" id="DKPIWVV"/>
<dbReference type="OrthoDB" id="5576752at2759"/>
<dbReference type="Proteomes" id="UP000001261">
    <property type="component" value="Unassembled WGS sequence"/>
</dbReference>
<dbReference type="GO" id="GO:0005743">
    <property type="term" value="C:mitochondrial inner membrane"/>
    <property type="evidence" value="ECO:0007669"/>
    <property type="project" value="UniProtKB-SubCell"/>
</dbReference>
<dbReference type="GO" id="GO:0034551">
    <property type="term" value="P:mitochondrial respiratory chain complex III assembly"/>
    <property type="evidence" value="ECO:0007669"/>
    <property type="project" value="TreeGrafter"/>
</dbReference>
<dbReference type="InterPro" id="IPR012420">
    <property type="entry name" value="Cbp4"/>
</dbReference>
<dbReference type="PANTHER" id="PTHR28202">
    <property type="entry name" value="ASSEMBLY FACTOR CBP4"/>
    <property type="match status" value="1"/>
</dbReference>
<dbReference type="PANTHER" id="PTHR28202:SF1">
    <property type="entry name" value="ASSEMBLY FACTOR CBP4"/>
    <property type="match status" value="1"/>
</dbReference>
<dbReference type="Pfam" id="PF07960">
    <property type="entry name" value="CBP4"/>
    <property type="match status" value="1"/>
</dbReference>
<evidence type="ECO:0000250" key="1"/>
<evidence type="ECO:0000255" key="2"/>
<evidence type="ECO:0000256" key="3">
    <source>
        <dbReference type="SAM" id="MobiDB-lite"/>
    </source>
</evidence>
<evidence type="ECO:0000305" key="4"/>
<sequence length="111" mass="12789">MGSAWKWTKMITVGAVVCVGGPMFVNYVRPTEEELFQRFNPELQKRNLANRDKRQQEFDEFVTKLKEYSKSDKPIWVVAKEAEELQKKQQREAALAAKKAAAETPTDKPTQ</sequence>
<name>CBP4_COCIM</name>
<keyword id="KW-0143">Chaperone</keyword>
<keyword id="KW-0175">Coiled coil</keyword>
<keyword id="KW-0472">Membrane</keyword>
<keyword id="KW-0496">Mitochondrion</keyword>
<keyword id="KW-0999">Mitochondrion inner membrane</keyword>
<keyword id="KW-1185">Reference proteome</keyword>
<keyword id="KW-0812">Transmembrane</keyword>
<keyword id="KW-1133">Transmembrane helix</keyword>
<comment type="function">
    <text evidence="1">Essential for the assembly of ubiquinol-cytochrome c reductase. It has a direct effect on the correct occurrence of the Rieske protein, core 4, core 5 and apocytochrome b (By similarity).</text>
</comment>
<comment type="subcellular location">
    <subcellularLocation>
        <location evidence="1">Mitochondrion inner membrane</location>
        <topology evidence="1">Single-pass membrane protein</topology>
    </subcellularLocation>
</comment>
<comment type="similarity">
    <text evidence="4">Belongs to the CBP4 family.</text>
</comment>
<protein>
    <recommendedName>
        <fullName>Assembly factor CBP4</fullName>
    </recommendedName>
    <alternativeName>
        <fullName>Cytochrome b mRNA-processing protein 4</fullName>
    </alternativeName>
</protein>